<sequence length="150" mass="16105">MQIILLEKVLNVGNLGDIVKVKDGYARNFLIPNKKARRATKEAIAEFEVRRAELEKVAAEKLSAAQAQGEKLSGMTVQIAQKAGVDGRLFGSVTNADIAAALGKQGFEVEKAQVRLPEGPLKMVGDHPVHVSLHTDVTVDVTVSVLGEHV</sequence>
<accession>B2JG21</accession>
<comment type="function">
    <text evidence="1">Binds to the 23S rRNA.</text>
</comment>
<comment type="similarity">
    <text evidence="1">Belongs to the bacterial ribosomal protein bL9 family.</text>
</comment>
<dbReference type="EMBL" id="CP001043">
    <property type="protein sequence ID" value="ACC70103.1"/>
    <property type="molecule type" value="Genomic_DNA"/>
</dbReference>
<dbReference type="RefSeq" id="WP_012400322.1">
    <property type="nucleotide sequence ID" value="NC_010622.1"/>
</dbReference>
<dbReference type="SMR" id="B2JG21"/>
<dbReference type="STRING" id="391038.Bphy_0914"/>
<dbReference type="KEGG" id="bph:Bphy_0914"/>
<dbReference type="eggNOG" id="COG0359">
    <property type="taxonomic scope" value="Bacteria"/>
</dbReference>
<dbReference type="HOGENOM" id="CLU_078938_4_1_4"/>
<dbReference type="OrthoDB" id="9788336at2"/>
<dbReference type="Proteomes" id="UP000001192">
    <property type="component" value="Chromosome 1"/>
</dbReference>
<dbReference type="GO" id="GO:1990904">
    <property type="term" value="C:ribonucleoprotein complex"/>
    <property type="evidence" value="ECO:0007669"/>
    <property type="project" value="UniProtKB-KW"/>
</dbReference>
<dbReference type="GO" id="GO:0005840">
    <property type="term" value="C:ribosome"/>
    <property type="evidence" value="ECO:0007669"/>
    <property type="project" value="UniProtKB-KW"/>
</dbReference>
<dbReference type="GO" id="GO:0019843">
    <property type="term" value="F:rRNA binding"/>
    <property type="evidence" value="ECO:0007669"/>
    <property type="project" value="UniProtKB-UniRule"/>
</dbReference>
<dbReference type="GO" id="GO:0003735">
    <property type="term" value="F:structural constituent of ribosome"/>
    <property type="evidence" value="ECO:0007669"/>
    <property type="project" value="InterPro"/>
</dbReference>
<dbReference type="GO" id="GO:0006412">
    <property type="term" value="P:translation"/>
    <property type="evidence" value="ECO:0007669"/>
    <property type="project" value="UniProtKB-UniRule"/>
</dbReference>
<dbReference type="Gene3D" id="3.10.430.100">
    <property type="entry name" value="Ribosomal protein L9, C-terminal domain"/>
    <property type="match status" value="1"/>
</dbReference>
<dbReference type="Gene3D" id="3.40.5.10">
    <property type="entry name" value="Ribosomal protein L9, N-terminal domain"/>
    <property type="match status" value="1"/>
</dbReference>
<dbReference type="HAMAP" id="MF_00503">
    <property type="entry name" value="Ribosomal_bL9"/>
    <property type="match status" value="1"/>
</dbReference>
<dbReference type="InterPro" id="IPR000244">
    <property type="entry name" value="Ribosomal_bL9"/>
</dbReference>
<dbReference type="InterPro" id="IPR009027">
    <property type="entry name" value="Ribosomal_bL9/RNase_H1_N"/>
</dbReference>
<dbReference type="InterPro" id="IPR020594">
    <property type="entry name" value="Ribosomal_bL9_bac/chp"/>
</dbReference>
<dbReference type="InterPro" id="IPR020069">
    <property type="entry name" value="Ribosomal_bL9_C"/>
</dbReference>
<dbReference type="InterPro" id="IPR036791">
    <property type="entry name" value="Ribosomal_bL9_C_sf"/>
</dbReference>
<dbReference type="InterPro" id="IPR020070">
    <property type="entry name" value="Ribosomal_bL9_N"/>
</dbReference>
<dbReference type="InterPro" id="IPR036935">
    <property type="entry name" value="Ribosomal_bL9_N_sf"/>
</dbReference>
<dbReference type="NCBIfam" id="TIGR00158">
    <property type="entry name" value="L9"/>
    <property type="match status" value="1"/>
</dbReference>
<dbReference type="PANTHER" id="PTHR21368">
    <property type="entry name" value="50S RIBOSOMAL PROTEIN L9"/>
    <property type="match status" value="1"/>
</dbReference>
<dbReference type="Pfam" id="PF03948">
    <property type="entry name" value="Ribosomal_L9_C"/>
    <property type="match status" value="1"/>
</dbReference>
<dbReference type="Pfam" id="PF01281">
    <property type="entry name" value="Ribosomal_L9_N"/>
    <property type="match status" value="1"/>
</dbReference>
<dbReference type="SUPFAM" id="SSF55658">
    <property type="entry name" value="L9 N-domain-like"/>
    <property type="match status" value="1"/>
</dbReference>
<dbReference type="SUPFAM" id="SSF55653">
    <property type="entry name" value="Ribosomal protein L9 C-domain"/>
    <property type="match status" value="1"/>
</dbReference>
<dbReference type="PROSITE" id="PS00651">
    <property type="entry name" value="RIBOSOMAL_L9"/>
    <property type="match status" value="1"/>
</dbReference>
<feature type="chain" id="PRO_1000126881" description="Large ribosomal subunit protein bL9">
    <location>
        <begin position="1"/>
        <end position="150"/>
    </location>
</feature>
<protein>
    <recommendedName>
        <fullName evidence="1">Large ribosomal subunit protein bL9</fullName>
    </recommendedName>
    <alternativeName>
        <fullName evidence="2">50S ribosomal protein L9</fullName>
    </alternativeName>
</protein>
<keyword id="KW-1185">Reference proteome</keyword>
<keyword id="KW-0687">Ribonucleoprotein</keyword>
<keyword id="KW-0689">Ribosomal protein</keyword>
<keyword id="KW-0694">RNA-binding</keyword>
<keyword id="KW-0699">rRNA-binding</keyword>
<proteinExistence type="inferred from homology"/>
<name>RL9_PARP8</name>
<evidence type="ECO:0000255" key="1">
    <source>
        <dbReference type="HAMAP-Rule" id="MF_00503"/>
    </source>
</evidence>
<evidence type="ECO:0000305" key="2"/>
<organism>
    <name type="scientific">Paraburkholderia phymatum (strain DSM 17167 / CIP 108236 / LMG 21445 / STM815)</name>
    <name type="common">Burkholderia phymatum</name>
    <dbReference type="NCBI Taxonomy" id="391038"/>
    <lineage>
        <taxon>Bacteria</taxon>
        <taxon>Pseudomonadati</taxon>
        <taxon>Pseudomonadota</taxon>
        <taxon>Betaproteobacteria</taxon>
        <taxon>Burkholderiales</taxon>
        <taxon>Burkholderiaceae</taxon>
        <taxon>Paraburkholderia</taxon>
    </lineage>
</organism>
<gene>
    <name evidence="1" type="primary">rplI</name>
    <name type="ordered locus">Bphy_0914</name>
</gene>
<reference key="1">
    <citation type="journal article" date="2014" name="Stand. Genomic Sci.">
        <title>Complete genome sequence of Burkholderia phymatum STM815(T), a broad host range and efficient nitrogen-fixing symbiont of Mimosa species.</title>
        <authorList>
            <person name="Moulin L."/>
            <person name="Klonowska A."/>
            <person name="Caroline B."/>
            <person name="Booth K."/>
            <person name="Vriezen J.A."/>
            <person name="Melkonian R."/>
            <person name="James E.K."/>
            <person name="Young J.P."/>
            <person name="Bena G."/>
            <person name="Hauser L."/>
            <person name="Land M."/>
            <person name="Kyrpides N."/>
            <person name="Bruce D."/>
            <person name="Chain P."/>
            <person name="Copeland A."/>
            <person name="Pitluck S."/>
            <person name="Woyke T."/>
            <person name="Lizotte-Waniewski M."/>
            <person name="Bristow J."/>
            <person name="Riley M."/>
        </authorList>
    </citation>
    <scope>NUCLEOTIDE SEQUENCE [LARGE SCALE GENOMIC DNA]</scope>
    <source>
        <strain>DSM 17167 / CIP 108236 / LMG 21445 / STM815</strain>
    </source>
</reference>